<proteinExistence type="evidence at protein level"/>
<accession>B3A0P3</accession>
<evidence type="ECO:0000255" key="1">
    <source>
        <dbReference type="PROSITE-ProRule" id="PRU00298"/>
    </source>
</evidence>
<evidence type="ECO:0000256" key="2">
    <source>
        <dbReference type="SAM" id="MobiDB-lite"/>
    </source>
</evidence>
<evidence type="ECO:0000269" key="3">
    <source>
    </source>
</evidence>
<evidence type="ECO:0000269" key="4">
    <source ref="1"/>
</evidence>
<evidence type="ECO:0000305" key="5"/>
<keyword id="KW-0903">Direct protein sequencing</keyword>
<keyword id="KW-0964">Secreted</keyword>
<dbReference type="EMBL" id="FC623427">
    <property type="status" value="NOT_ANNOTATED_CDS"/>
    <property type="molecule type" value="mRNA"/>
</dbReference>
<dbReference type="EMBL" id="FC627615">
    <property type="status" value="NOT_ANNOTATED_CDS"/>
    <property type="molecule type" value="mRNA"/>
</dbReference>
<dbReference type="EMBL" id="FC628592">
    <property type="status" value="NOT_ANNOTATED_CDS"/>
    <property type="molecule type" value="mRNA"/>
</dbReference>
<dbReference type="EMBL" id="FC631694">
    <property type="status" value="NOT_ANNOTATED_CDS"/>
    <property type="molecule type" value="mRNA"/>
</dbReference>
<dbReference type="SMR" id="B3A0P3"/>
<dbReference type="GO" id="GO:0005576">
    <property type="term" value="C:extracellular region"/>
    <property type="evidence" value="ECO:0007669"/>
    <property type="project" value="UniProtKB-SubCell"/>
</dbReference>
<dbReference type="GO" id="GO:0020037">
    <property type="term" value="F:heme binding"/>
    <property type="evidence" value="ECO:0007669"/>
    <property type="project" value="InterPro"/>
</dbReference>
<dbReference type="GO" id="GO:0004601">
    <property type="term" value="F:peroxidase activity"/>
    <property type="evidence" value="ECO:0007669"/>
    <property type="project" value="InterPro"/>
</dbReference>
<dbReference type="GO" id="GO:0006979">
    <property type="term" value="P:response to oxidative stress"/>
    <property type="evidence" value="ECO:0007669"/>
    <property type="project" value="InterPro"/>
</dbReference>
<dbReference type="Gene3D" id="1.10.640.10">
    <property type="entry name" value="Haem peroxidase domain superfamily, animal type"/>
    <property type="match status" value="2"/>
</dbReference>
<dbReference type="InterPro" id="IPR019791">
    <property type="entry name" value="Haem_peroxidase_animal"/>
</dbReference>
<dbReference type="InterPro" id="IPR010255">
    <property type="entry name" value="Haem_peroxidase_sf"/>
</dbReference>
<dbReference type="InterPro" id="IPR037120">
    <property type="entry name" value="Haem_peroxidase_sf_animal"/>
</dbReference>
<dbReference type="PANTHER" id="PTHR11475:SF4">
    <property type="entry name" value="CHORION PEROXIDASE"/>
    <property type="match status" value="1"/>
</dbReference>
<dbReference type="PANTHER" id="PTHR11475">
    <property type="entry name" value="OXIDASE/PEROXIDASE"/>
    <property type="match status" value="1"/>
</dbReference>
<dbReference type="Pfam" id="PF03098">
    <property type="entry name" value="An_peroxidase"/>
    <property type="match status" value="2"/>
</dbReference>
<dbReference type="SUPFAM" id="SSF48113">
    <property type="entry name" value="Heme-dependent peroxidases"/>
    <property type="match status" value="2"/>
</dbReference>
<dbReference type="PROSITE" id="PS50292">
    <property type="entry name" value="PEROXIDASE_3"/>
    <property type="match status" value="1"/>
</dbReference>
<name>PLSP2_LOTGI</name>
<sequence>TTSCTDAKGKQYRTADGTCNNVNKPTVGSSMDKFKRDVKPQYDDKKGDPRTKGRCLYKTEKGCYRPDLPSARAISVVVHSKQTSVDDDSSKSSAVSPKMPSMGNLQSLGNLLSLGSVPVPAPAPAPEPVSAPSVDIAPAQPVAGPSITDLLGLMSIIQKPKSKPKPKPKPKPQPKPQPESKPILSQGAIGDILGLLGTLVASPEKETPVSSQPDDSISGLMGKVDEPRIRTPKKSPRKKARQSIFRRRDDRKDDRKGLRGTKGRRDDSDDNDDSDDDDDDIEVRISNVFATAAIKFVAALSPDYIDIRGRKIRLRDTYNNPEMVFDELPELIEEMLQQPTEERNRFISKELTDHFLEDGSRSFDEVASIIQRGRDHGVPPYNWFRQFCGLPIVRSFNSRVFGDAGPYLRKVYKSVDDIDIYTGAMSEPNLPGSLLGETFSCIFARQFRDLKFGDSFFYLSDDPLRGFSKEQRRELDTITLSKAMCFVFGLEAVQMNPLRVPSAQNPLSDCEQIPSFFSFLEDPSEGPRSNLLSRVSQSESVASLSGIMPRFFDAESAGPSMKDNGYEGVGNVLPPAFTTNGVSKTVVGASPRGSERFRDVEVEDPEGGFGMPLPGVPIPSMSSNTDAVSQGDPLNELTQMGGTVDGEVEVEEPEIPGPQEGKASGSLPRAFTDGRQMPLGSSPGSLGGVQGSATQPDALDPTILPGVPLDLQPKAQDPTKLPGVPEYLQPKPKSSGLSTQGAVGGEMGKGEIELEDQLGSHGVAGGAVEVGEAEGAAGGIDGSVGSGGMGGSVGVGGSGGMGGSVGVGGMGGSVGVGGSGGMGGSVGVGGMGGSVGVGGSVGSGGSGGSRGAGGSGDDGDDCCQDDSKCSDDEKQKYCKNSDTK</sequence>
<reference evidence="5" key="1">
    <citation type="submission" date="2007-12" db="EMBL/GenBank/DDBJ databases">
        <title>DOE Joint Genome Institute Lottia gigantea EST project.</title>
        <authorList>
            <person name="Richardson P."/>
            <person name="Lucas S."/>
            <person name="Rokhsar D."/>
            <person name="Wang M."/>
            <person name="Lindquist E.A."/>
        </authorList>
    </citation>
    <scope>NUCLEOTIDE SEQUENCE [LARGE SCALE MRNA]</scope>
    <scope>IDENTIFICATION</scope>
    <source>
        <tissue evidence="4">Mantle</tissue>
    </source>
</reference>
<reference key="2">
    <citation type="journal article" date="2013" name="FEBS J.">
        <title>The shell-forming proteome of Lottia gigantea reveals both deep conservations and lineage-specific novelties.</title>
        <authorList>
            <person name="Marie B."/>
            <person name="Jackson D.J."/>
            <person name="Ramos-Silva P."/>
            <person name="Zanella-Cleon I."/>
            <person name="Guichard N."/>
            <person name="Marin F."/>
        </authorList>
    </citation>
    <scope>PROTEIN SEQUENCE OF 37-50; 62-81; 285-308; 346-394; 400-410; 452-465 AND 474-482</scope>
    <scope>SUBCELLULAR LOCATION</scope>
    <scope>TISSUE SPECIFICITY</scope>
    <source>
        <tissue>Shell</tissue>
    </source>
</reference>
<comment type="subcellular location">
    <subcellularLocation>
        <location evidence="3">Secreted</location>
    </subcellularLocation>
</comment>
<comment type="tissue specificity">
    <text evidence="3">Component of the acid-insoluble and acid-soluble organic matrix of calcified layers of the shell (at protein level).</text>
</comment>
<comment type="similarity">
    <text evidence="1">Belongs to the peroxidase family.</text>
</comment>
<protein>
    <recommendedName>
        <fullName>Peroxidase-like protein 2</fullName>
    </recommendedName>
</protein>
<organism>
    <name type="scientific">Lottia gigantea</name>
    <name type="common">Giant owl limpet</name>
    <dbReference type="NCBI Taxonomy" id="225164"/>
    <lineage>
        <taxon>Eukaryota</taxon>
        <taxon>Metazoa</taxon>
        <taxon>Spiralia</taxon>
        <taxon>Lophotrochozoa</taxon>
        <taxon>Mollusca</taxon>
        <taxon>Gastropoda</taxon>
        <taxon>Patellogastropoda</taxon>
        <taxon>Lottioidea</taxon>
        <taxon>Lottiidae</taxon>
        <taxon>Lottia</taxon>
    </lineage>
</organism>
<feature type="chain" id="PRO_0000415263" description="Peroxidase-like protein 2">
    <location>
        <begin position="1"/>
        <end position="884"/>
    </location>
</feature>
<feature type="region of interest" description="Disordered" evidence="2">
    <location>
        <begin position="1"/>
        <end position="53"/>
    </location>
</feature>
<feature type="region of interest" description="Disordered" evidence="2">
    <location>
        <begin position="78"/>
        <end position="188"/>
    </location>
</feature>
<feature type="region of interest" description="Disordered" evidence="2">
    <location>
        <begin position="204"/>
        <end position="279"/>
    </location>
</feature>
<feature type="region of interest" description="Disordered" evidence="2">
    <location>
        <begin position="653"/>
        <end position="695"/>
    </location>
</feature>
<feature type="region of interest" description="Disordered" evidence="2">
    <location>
        <begin position="710"/>
        <end position="744"/>
    </location>
</feature>
<feature type="region of interest" description="Disordered" evidence="2">
    <location>
        <begin position="828"/>
        <end position="884"/>
    </location>
</feature>
<feature type="compositionally biased region" description="Polar residues" evidence="2">
    <location>
        <begin position="17"/>
        <end position="29"/>
    </location>
</feature>
<feature type="compositionally biased region" description="Basic and acidic residues" evidence="2">
    <location>
        <begin position="32"/>
        <end position="53"/>
    </location>
</feature>
<feature type="compositionally biased region" description="Low complexity" evidence="2">
    <location>
        <begin position="91"/>
        <end position="118"/>
    </location>
</feature>
<feature type="compositionally biased region" description="Pro residues" evidence="2">
    <location>
        <begin position="119"/>
        <end position="129"/>
    </location>
</feature>
<feature type="compositionally biased region" description="Basic residues" evidence="2">
    <location>
        <begin position="160"/>
        <end position="172"/>
    </location>
</feature>
<feature type="compositionally biased region" description="Basic residues" evidence="2">
    <location>
        <begin position="230"/>
        <end position="245"/>
    </location>
</feature>
<feature type="compositionally biased region" description="Basic and acidic residues" evidence="2">
    <location>
        <begin position="246"/>
        <end position="267"/>
    </location>
</feature>
<feature type="compositionally biased region" description="Acidic residues" evidence="2">
    <location>
        <begin position="268"/>
        <end position="279"/>
    </location>
</feature>
<feature type="compositionally biased region" description="Gly residues" evidence="2">
    <location>
        <begin position="828"/>
        <end position="856"/>
    </location>
</feature>
<feature type="compositionally biased region" description="Basic and acidic residues" evidence="2">
    <location>
        <begin position="865"/>
        <end position="884"/>
    </location>
</feature>
<feature type="non-consecutive residues" evidence="5">
    <location>
        <begin position="280"/>
        <end position="281"/>
    </location>
</feature>
<feature type="non-terminal residue" evidence="5">
    <location>
        <position position="1"/>
    </location>
</feature>